<geneLocation type="plasmid">
    <name>PL131</name>
</geneLocation>
<evidence type="ECO:0000255" key="1">
    <source>
        <dbReference type="HAMAP-Rule" id="MF_00440"/>
    </source>
</evidence>
<evidence type="ECO:0000256" key="2">
    <source>
        <dbReference type="SAM" id="MobiDB-lite"/>
    </source>
</evidence>
<name>NRDR_NATPD</name>
<gene>
    <name evidence="1" type="primary">nrdR</name>
    <name type="ordered locus">NP_6162A</name>
</gene>
<feature type="chain" id="PRO_0000249028" description="Transcriptional repressor NrdR">
    <location>
        <begin position="1"/>
        <end position="162"/>
    </location>
</feature>
<feature type="domain" description="ATP-cone" evidence="1">
    <location>
        <begin position="49"/>
        <end position="139"/>
    </location>
</feature>
<feature type="zinc finger region" evidence="1">
    <location>
        <begin position="3"/>
        <end position="34"/>
    </location>
</feature>
<feature type="region of interest" description="Disordered" evidence="2">
    <location>
        <begin position="1"/>
        <end position="21"/>
    </location>
</feature>
<accession>Q3IM07</accession>
<keyword id="KW-0067">ATP-binding</keyword>
<keyword id="KW-0238">DNA-binding</keyword>
<keyword id="KW-0479">Metal-binding</keyword>
<keyword id="KW-0547">Nucleotide-binding</keyword>
<keyword id="KW-0614">Plasmid</keyword>
<keyword id="KW-1185">Reference proteome</keyword>
<keyword id="KW-0678">Repressor</keyword>
<keyword id="KW-0804">Transcription</keyword>
<keyword id="KW-0805">Transcription regulation</keyword>
<keyword id="KW-0862">Zinc</keyword>
<keyword id="KW-0863">Zinc-finger</keyword>
<sequence>MNCPDCGNGRTRVIDTGASSDGASVRRRRECQRCSFRFTTYERPEWKSLQVKKRDGTIESFDQQKLRTGIERAVEKRGVAETTVTALVDDIESELQDREARIVSSSLIGELVSENLRTLDKVAYIRFVSVYKAFSEPQEFLKELDAVLGAELDDFEASNSSQ</sequence>
<comment type="function">
    <text evidence="1">Negatively regulates transcription of bacterial ribonucleotide reductase nrd genes and operons by binding to NrdR-boxes.</text>
</comment>
<comment type="cofactor">
    <cofactor evidence="1">
        <name>Zn(2+)</name>
        <dbReference type="ChEBI" id="CHEBI:29105"/>
    </cofactor>
    <text evidence="1">Binds 1 zinc ion.</text>
</comment>
<comment type="similarity">
    <text evidence="1">Belongs to the NrdR family.</text>
</comment>
<protein>
    <recommendedName>
        <fullName evidence="1">Transcriptional repressor NrdR</fullName>
    </recommendedName>
</protein>
<reference key="1">
    <citation type="journal article" date="2005" name="Genome Res.">
        <title>Living with two extremes: conclusions from the genome sequence of Natronomonas pharaonis.</title>
        <authorList>
            <person name="Falb M."/>
            <person name="Pfeiffer F."/>
            <person name="Palm P."/>
            <person name="Rodewald K."/>
            <person name="Hickmann V."/>
            <person name="Tittor J."/>
            <person name="Oesterhelt D."/>
        </authorList>
    </citation>
    <scope>NUCLEOTIDE SEQUENCE [LARGE SCALE GENOMIC DNA]</scope>
    <source>
        <strain>ATCC 35678 / DSM 2160 / CIP 103997 / JCM 8858 / NBRC 14720 / NCIMB 2260 / Gabara</strain>
    </source>
</reference>
<dbReference type="EMBL" id="CR936258">
    <property type="protein sequence ID" value="CAI50861.1"/>
    <property type="molecule type" value="Genomic_DNA"/>
</dbReference>
<dbReference type="RefSeq" id="WP_011324460.1">
    <property type="nucleotide sequence ID" value="NC_007427.1"/>
</dbReference>
<dbReference type="SMR" id="Q3IM07"/>
<dbReference type="EnsemblBacteria" id="CAI50861">
    <property type="protein sequence ID" value="CAI50861"/>
    <property type="gene ID" value="NP_6162A"/>
</dbReference>
<dbReference type="GeneID" id="3694633"/>
<dbReference type="KEGG" id="nph:NP_6162A"/>
<dbReference type="HOGENOM" id="CLU_108412_0_0_2"/>
<dbReference type="OrthoDB" id="212442at2157"/>
<dbReference type="Proteomes" id="UP000002698">
    <property type="component" value="Plasmid PL131"/>
</dbReference>
<dbReference type="GO" id="GO:0005524">
    <property type="term" value="F:ATP binding"/>
    <property type="evidence" value="ECO:0007669"/>
    <property type="project" value="UniProtKB-KW"/>
</dbReference>
<dbReference type="GO" id="GO:0003677">
    <property type="term" value="F:DNA binding"/>
    <property type="evidence" value="ECO:0007669"/>
    <property type="project" value="UniProtKB-KW"/>
</dbReference>
<dbReference type="GO" id="GO:0008270">
    <property type="term" value="F:zinc ion binding"/>
    <property type="evidence" value="ECO:0007669"/>
    <property type="project" value="UniProtKB-UniRule"/>
</dbReference>
<dbReference type="GO" id="GO:0045892">
    <property type="term" value="P:negative regulation of DNA-templated transcription"/>
    <property type="evidence" value="ECO:0007669"/>
    <property type="project" value="UniProtKB-UniRule"/>
</dbReference>
<dbReference type="HAMAP" id="MF_00440">
    <property type="entry name" value="NrdR"/>
    <property type="match status" value="1"/>
</dbReference>
<dbReference type="InterPro" id="IPR005144">
    <property type="entry name" value="ATP-cone_dom"/>
</dbReference>
<dbReference type="InterPro" id="IPR055173">
    <property type="entry name" value="NrdR-like_N"/>
</dbReference>
<dbReference type="InterPro" id="IPR003796">
    <property type="entry name" value="RNR_NrdR-like"/>
</dbReference>
<dbReference type="NCBIfam" id="TIGR00244">
    <property type="entry name" value="transcriptional regulator NrdR"/>
    <property type="match status" value="1"/>
</dbReference>
<dbReference type="PANTHER" id="PTHR30455">
    <property type="entry name" value="TRANSCRIPTIONAL REPRESSOR NRDR"/>
    <property type="match status" value="1"/>
</dbReference>
<dbReference type="PANTHER" id="PTHR30455:SF2">
    <property type="entry name" value="TRANSCRIPTIONAL REPRESSOR NRDR"/>
    <property type="match status" value="1"/>
</dbReference>
<dbReference type="Pfam" id="PF03477">
    <property type="entry name" value="ATP-cone"/>
    <property type="match status" value="1"/>
</dbReference>
<dbReference type="Pfam" id="PF22811">
    <property type="entry name" value="Zn_ribbon_NrdR"/>
    <property type="match status" value="1"/>
</dbReference>
<dbReference type="PROSITE" id="PS51161">
    <property type="entry name" value="ATP_CONE"/>
    <property type="match status" value="1"/>
</dbReference>
<organism>
    <name type="scientific">Natronomonas pharaonis (strain ATCC 35678 / DSM 2160 / CIP 103997 / JCM 8858 / NBRC 14720 / NCIMB 2260 / Gabara)</name>
    <name type="common">Halobacterium pharaonis</name>
    <dbReference type="NCBI Taxonomy" id="348780"/>
    <lineage>
        <taxon>Archaea</taxon>
        <taxon>Methanobacteriati</taxon>
        <taxon>Methanobacteriota</taxon>
        <taxon>Stenosarchaea group</taxon>
        <taxon>Halobacteria</taxon>
        <taxon>Halobacteriales</taxon>
        <taxon>Haloarculaceae</taxon>
        <taxon>Natronomonas</taxon>
    </lineage>
</organism>
<proteinExistence type="inferred from homology"/>